<comment type="function">
    <text evidence="1">NDH-1 shuttles electrons from NADH, via FMN and iron-sulfur (Fe-S) centers, to quinones in the respiratory chain. The immediate electron acceptor for the enzyme in this species is believed to be ubiquinone. Couples the redox reaction to proton translocation (for every two electrons transferred, four hydrogen ions are translocated across the cytoplasmic membrane), and thus conserves the redox energy in a proton gradient.</text>
</comment>
<comment type="catalytic activity">
    <reaction evidence="1">
        <text>a quinone + NADH + 5 H(+)(in) = a quinol + NAD(+) + 4 H(+)(out)</text>
        <dbReference type="Rhea" id="RHEA:57888"/>
        <dbReference type="ChEBI" id="CHEBI:15378"/>
        <dbReference type="ChEBI" id="CHEBI:24646"/>
        <dbReference type="ChEBI" id="CHEBI:57540"/>
        <dbReference type="ChEBI" id="CHEBI:57945"/>
        <dbReference type="ChEBI" id="CHEBI:132124"/>
    </reaction>
</comment>
<comment type="subunit">
    <text evidence="1">NDH-1 is composed of 13 different subunits. Subunits NuoB, CD, E, F, and G constitute the peripheral sector of the complex.</text>
</comment>
<comment type="subcellular location">
    <subcellularLocation>
        <location evidence="1">Cell inner membrane</location>
        <topology evidence="1">Peripheral membrane protein</topology>
        <orientation evidence="1">Cytoplasmic side</orientation>
    </subcellularLocation>
</comment>
<comment type="similarity">
    <text evidence="1">In the N-terminal section; belongs to the complex I 30 kDa subunit family.</text>
</comment>
<comment type="similarity">
    <text evidence="1">In the C-terminal section; belongs to the complex I 49 kDa subunit family.</text>
</comment>
<gene>
    <name evidence="1" type="primary">nuoC</name>
    <name evidence="1" type="synonym">nuoCD</name>
    <name evidence="1" type="synonym">nuoD</name>
    <name type="ordered locus">AHA_1780</name>
</gene>
<accession>A0KJ65</accession>
<evidence type="ECO:0000255" key="1">
    <source>
        <dbReference type="HAMAP-Rule" id="MF_01359"/>
    </source>
</evidence>
<protein>
    <recommendedName>
        <fullName evidence="1">NADH-quinone oxidoreductase subunit C/D</fullName>
        <ecNumber evidence="1">7.1.1.-</ecNumber>
    </recommendedName>
    <alternativeName>
        <fullName evidence="1">NADH dehydrogenase I subunit C/D</fullName>
    </alternativeName>
    <alternativeName>
        <fullName evidence="1">NDH-1 subunit C/D</fullName>
    </alternativeName>
</protein>
<keyword id="KW-0997">Cell inner membrane</keyword>
<keyword id="KW-1003">Cell membrane</keyword>
<keyword id="KW-0472">Membrane</keyword>
<keyword id="KW-0511">Multifunctional enzyme</keyword>
<keyword id="KW-0520">NAD</keyword>
<keyword id="KW-0874">Quinone</keyword>
<keyword id="KW-1185">Reference proteome</keyword>
<keyword id="KW-1278">Translocase</keyword>
<keyword id="KW-0813">Transport</keyword>
<keyword id="KW-0830">Ubiquinone</keyword>
<dbReference type="EC" id="7.1.1.-" evidence="1"/>
<dbReference type="EMBL" id="CP000462">
    <property type="protein sequence ID" value="ABK38284.1"/>
    <property type="molecule type" value="Genomic_DNA"/>
</dbReference>
<dbReference type="RefSeq" id="WP_011705665.1">
    <property type="nucleotide sequence ID" value="NC_008570.1"/>
</dbReference>
<dbReference type="RefSeq" id="YP_856316.1">
    <property type="nucleotide sequence ID" value="NC_008570.1"/>
</dbReference>
<dbReference type="SMR" id="A0KJ65"/>
<dbReference type="STRING" id="380703.AHA_1780"/>
<dbReference type="EnsemblBacteria" id="ABK38284">
    <property type="protein sequence ID" value="ABK38284"/>
    <property type="gene ID" value="AHA_1780"/>
</dbReference>
<dbReference type="GeneID" id="4486798"/>
<dbReference type="KEGG" id="aha:AHA_1780"/>
<dbReference type="PATRIC" id="fig|380703.7.peg.1796"/>
<dbReference type="eggNOG" id="COG0649">
    <property type="taxonomic scope" value="Bacteria"/>
</dbReference>
<dbReference type="eggNOG" id="COG0852">
    <property type="taxonomic scope" value="Bacteria"/>
</dbReference>
<dbReference type="HOGENOM" id="CLU_015134_3_2_6"/>
<dbReference type="OrthoDB" id="9801496at2"/>
<dbReference type="Proteomes" id="UP000000756">
    <property type="component" value="Chromosome"/>
</dbReference>
<dbReference type="GO" id="GO:0030964">
    <property type="term" value="C:NADH dehydrogenase complex"/>
    <property type="evidence" value="ECO:0007669"/>
    <property type="project" value="InterPro"/>
</dbReference>
<dbReference type="GO" id="GO:0005886">
    <property type="term" value="C:plasma membrane"/>
    <property type="evidence" value="ECO:0007669"/>
    <property type="project" value="UniProtKB-SubCell"/>
</dbReference>
<dbReference type="GO" id="GO:0051287">
    <property type="term" value="F:NAD binding"/>
    <property type="evidence" value="ECO:0007669"/>
    <property type="project" value="InterPro"/>
</dbReference>
<dbReference type="GO" id="GO:0008137">
    <property type="term" value="F:NADH dehydrogenase (ubiquinone) activity"/>
    <property type="evidence" value="ECO:0007669"/>
    <property type="project" value="InterPro"/>
</dbReference>
<dbReference type="GO" id="GO:0050136">
    <property type="term" value="F:NADH:ubiquinone reductase (non-electrogenic) activity"/>
    <property type="evidence" value="ECO:0007669"/>
    <property type="project" value="UniProtKB-UniRule"/>
</dbReference>
<dbReference type="GO" id="GO:0048038">
    <property type="term" value="F:quinone binding"/>
    <property type="evidence" value="ECO:0007669"/>
    <property type="project" value="UniProtKB-KW"/>
</dbReference>
<dbReference type="FunFam" id="1.10.645.10:FF:000001">
    <property type="entry name" value="NADH-quinone oxidoreductase subunit C/D"/>
    <property type="match status" value="1"/>
</dbReference>
<dbReference type="FunFam" id="3.30.460.80:FF:000001">
    <property type="entry name" value="NADH-quinone oxidoreductase subunit C/D"/>
    <property type="match status" value="1"/>
</dbReference>
<dbReference type="Gene3D" id="1.10.645.10">
    <property type="entry name" value="Cytochrome-c3 Hydrogenase, chain B"/>
    <property type="match status" value="1"/>
</dbReference>
<dbReference type="Gene3D" id="3.30.460.80">
    <property type="entry name" value="NADH:ubiquinone oxidoreductase, 30kDa subunit"/>
    <property type="match status" value="1"/>
</dbReference>
<dbReference type="HAMAP" id="MF_01359">
    <property type="entry name" value="NDH1_NuoCD_1"/>
    <property type="match status" value="1"/>
</dbReference>
<dbReference type="HAMAP" id="MF_01358">
    <property type="entry name" value="NDH1_NuoD"/>
    <property type="match status" value="1"/>
</dbReference>
<dbReference type="InterPro" id="IPR010218">
    <property type="entry name" value="NADH_DH_suC"/>
</dbReference>
<dbReference type="InterPro" id="IPR023062">
    <property type="entry name" value="NADH_DH_suCD"/>
</dbReference>
<dbReference type="InterPro" id="IPR001135">
    <property type="entry name" value="NADH_Q_OxRdtase_suD"/>
</dbReference>
<dbReference type="InterPro" id="IPR037232">
    <property type="entry name" value="NADH_quin_OxRdtase_su_C/D-like"/>
</dbReference>
<dbReference type="InterPro" id="IPR001268">
    <property type="entry name" value="NADH_UbQ_OxRdtase_30kDa_su"/>
</dbReference>
<dbReference type="InterPro" id="IPR014029">
    <property type="entry name" value="NADH_UbQ_OxRdtase_49kDa_CS"/>
</dbReference>
<dbReference type="InterPro" id="IPR022885">
    <property type="entry name" value="NDH1_su_D/H"/>
</dbReference>
<dbReference type="InterPro" id="IPR029014">
    <property type="entry name" value="NiFe-Hase_large"/>
</dbReference>
<dbReference type="NCBIfam" id="TIGR01961">
    <property type="entry name" value="NuoC_fam"/>
    <property type="match status" value="1"/>
</dbReference>
<dbReference type="NCBIfam" id="TIGR01962">
    <property type="entry name" value="NuoD"/>
    <property type="match status" value="1"/>
</dbReference>
<dbReference type="NCBIfam" id="NF004739">
    <property type="entry name" value="PRK06075.1"/>
    <property type="match status" value="1"/>
</dbReference>
<dbReference type="NCBIfam" id="NF008728">
    <property type="entry name" value="PRK11742.1"/>
    <property type="match status" value="1"/>
</dbReference>
<dbReference type="PANTHER" id="PTHR11993:SF45">
    <property type="entry name" value="NADH-QUINONE OXIDOREDUCTASE SUBUNIT C_D"/>
    <property type="match status" value="1"/>
</dbReference>
<dbReference type="PANTHER" id="PTHR11993">
    <property type="entry name" value="NADH-UBIQUINONE OXIDOREDUCTASE 49 KDA SUBUNIT"/>
    <property type="match status" value="1"/>
</dbReference>
<dbReference type="Pfam" id="PF00329">
    <property type="entry name" value="Complex1_30kDa"/>
    <property type="match status" value="1"/>
</dbReference>
<dbReference type="Pfam" id="PF00346">
    <property type="entry name" value="Complex1_49kDa"/>
    <property type="match status" value="1"/>
</dbReference>
<dbReference type="SUPFAM" id="SSF56762">
    <property type="entry name" value="HydB/Nqo4-like"/>
    <property type="match status" value="1"/>
</dbReference>
<dbReference type="SUPFAM" id="SSF143243">
    <property type="entry name" value="Nqo5-like"/>
    <property type="match status" value="1"/>
</dbReference>
<dbReference type="PROSITE" id="PS00535">
    <property type="entry name" value="COMPLEX1_49K"/>
    <property type="match status" value="1"/>
</dbReference>
<name>NUOCD_AERHH</name>
<organism>
    <name type="scientific">Aeromonas hydrophila subsp. hydrophila (strain ATCC 7966 / DSM 30187 / BCRC 13018 / CCUG 14551 / JCM 1027 / KCTC 2358 / NCIMB 9240 / NCTC 8049)</name>
    <dbReference type="NCBI Taxonomy" id="380703"/>
    <lineage>
        <taxon>Bacteria</taxon>
        <taxon>Pseudomonadati</taxon>
        <taxon>Pseudomonadota</taxon>
        <taxon>Gammaproteobacteria</taxon>
        <taxon>Aeromonadales</taxon>
        <taxon>Aeromonadaceae</taxon>
        <taxon>Aeromonas</taxon>
    </lineage>
</organism>
<sequence length="601" mass="69093">MKLTREFPSNYAMAQWQPSDHKDAQVIGELFAHFGAERFTIQNTRTGVPVVWLSRELLLDVMGFLRKLPSPFVMLFDLSATDERMRSHRHDLPDSDFTVFYHLISIDRNADLMLKVPLKEGDLTLPTVSRHFPNANWYEREVWDLMGINFDGHPHLTRIMMPKSWQGHPLRKDYPARATEFDPFMLDAVKQDQEQDNLLFKPEEWGMARGNENEDYMFLNLGPNHPSAHGAFRLVLQLDGEEIRDCVPDIGYHHRGAEKMGERQSWHSYIPYTDRVEYLGGVMNNLPYVLAVEKLAGIKVPQRVDMIRVMLAELFRIQSHLLFIGTYIQDVGAMTPVFFTFTDRQRIYTIIEAITGARMHPAWFRIGGVAHDLPVGWQRLVQDNLLSWLPKRLMDYEKAAMRNSILRGRTIGVAAYNTEQALAWGTTGGGLRATGLNFDVRKWRPYSGYDQFEFEVPVGANGDAYDRALVRIEEVRQSMRIIEQCMKNMPEGPFKADHPLTTPPPKERTLQDIETLITHFLQVSWGPVMPAAESFQMIEATKGINSYYLTSDGSTMSYRTRIRTPSFAHLQQIPSVIRGQMVSDLIVYLGSIDFVMSDVDR</sequence>
<feature type="chain" id="PRO_0000358611" description="NADH-quinone oxidoreductase subunit C/D">
    <location>
        <begin position="1"/>
        <end position="601"/>
    </location>
</feature>
<feature type="region of interest" description="NADH dehydrogenase I subunit C" evidence="1">
    <location>
        <begin position="1"/>
        <end position="191"/>
    </location>
</feature>
<feature type="region of interest" description="NADH dehydrogenase I subunit D" evidence="1">
    <location>
        <begin position="215"/>
        <end position="601"/>
    </location>
</feature>
<reference key="1">
    <citation type="journal article" date="2006" name="J. Bacteriol.">
        <title>Genome sequence of Aeromonas hydrophila ATCC 7966T: jack of all trades.</title>
        <authorList>
            <person name="Seshadri R."/>
            <person name="Joseph S.W."/>
            <person name="Chopra A.K."/>
            <person name="Sha J."/>
            <person name="Shaw J."/>
            <person name="Graf J."/>
            <person name="Haft D.H."/>
            <person name="Wu M."/>
            <person name="Ren Q."/>
            <person name="Rosovitz M.J."/>
            <person name="Madupu R."/>
            <person name="Tallon L."/>
            <person name="Kim M."/>
            <person name="Jin S."/>
            <person name="Vuong H."/>
            <person name="Stine O.C."/>
            <person name="Ali A."/>
            <person name="Horneman A.J."/>
            <person name="Heidelberg J.F."/>
        </authorList>
    </citation>
    <scope>NUCLEOTIDE SEQUENCE [LARGE SCALE GENOMIC DNA]</scope>
    <source>
        <strain>ATCC 7966 / DSM 30187 / BCRC 13018 / CCUG 14551 / JCM 1027 / KCTC 2358 / NCIMB 9240 / NCTC 8049</strain>
    </source>
</reference>
<proteinExistence type="inferred from homology"/>